<name>TX21I_TRILK</name>
<protein>
    <recommendedName>
        <fullName evidence="3">Toxin ICK-18</fullName>
    </recommendedName>
</protein>
<dbReference type="EMBL" id="GAQE01000021">
    <property type="protein sequence ID" value="JAB84533.1"/>
    <property type="molecule type" value="Transcribed_RNA"/>
</dbReference>
<dbReference type="SMR" id="W4VSI6"/>
<dbReference type="ArachnoServer" id="AS001724">
    <property type="toxin name" value="U7-barytoxin-Tl1a"/>
</dbReference>
<dbReference type="GO" id="GO:0005576">
    <property type="term" value="C:extracellular region"/>
    <property type="evidence" value="ECO:0007669"/>
    <property type="project" value="UniProtKB-SubCell"/>
</dbReference>
<dbReference type="GO" id="GO:0099106">
    <property type="term" value="F:ion channel regulator activity"/>
    <property type="evidence" value="ECO:0007669"/>
    <property type="project" value="UniProtKB-KW"/>
</dbReference>
<dbReference type="GO" id="GO:0090729">
    <property type="term" value="F:toxin activity"/>
    <property type="evidence" value="ECO:0007669"/>
    <property type="project" value="UniProtKB-KW"/>
</dbReference>
<dbReference type="InterPro" id="IPR035311">
    <property type="entry name" value="Cys_Knot_tox"/>
</dbReference>
<dbReference type="Pfam" id="PF17486">
    <property type="entry name" value="Cys_Knot_tox"/>
    <property type="match status" value="1"/>
</dbReference>
<keyword id="KW-1015">Disulfide bond</keyword>
<keyword id="KW-0872">Ion channel impairing toxin</keyword>
<keyword id="KW-0960">Knottin</keyword>
<keyword id="KW-0528">Neurotoxin</keyword>
<keyword id="KW-0964">Secreted</keyword>
<keyword id="KW-0732">Signal</keyword>
<keyword id="KW-0800">Toxin</keyword>
<feature type="signal peptide" evidence="2">
    <location>
        <begin position="1"/>
        <end position="19"/>
    </location>
</feature>
<feature type="chain" id="PRO_0000429225" description="Toxin ICK-18">
    <location>
        <begin position="20"/>
        <end position="86"/>
    </location>
</feature>
<feature type="disulfide bond" evidence="1">
    <location>
        <begin position="35"/>
        <end position="49"/>
    </location>
</feature>
<feature type="disulfide bond" evidence="1">
    <location>
        <begin position="42"/>
        <end position="61"/>
    </location>
</feature>
<feature type="disulfide bond" evidence="1">
    <location>
        <begin position="48"/>
        <end position="76"/>
    </location>
</feature>
<feature type="disulfide bond" evidence="1">
    <location>
        <begin position="79"/>
        <end position="86"/>
    </location>
</feature>
<organism>
    <name type="scientific">Trittame loki</name>
    <name type="common">Brush-footed trapdoor spider</name>
    <dbReference type="NCBI Taxonomy" id="1295018"/>
    <lineage>
        <taxon>Eukaryota</taxon>
        <taxon>Metazoa</taxon>
        <taxon>Ecdysozoa</taxon>
        <taxon>Arthropoda</taxon>
        <taxon>Chelicerata</taxon>
        <taxon>Arachnida</taxon>
        <taxon>Araneae</taxon>
        <taxon>Mygalomorphae</taxon>
        <taxon>Barychelidae</taxon>
        <taxon>Trittame</taxon>
    </lineage>
</organism>
<sequence length="86" mass="9541">MKTIFALVFCCAIAVVVLGFGENEGSTIDHDQNNCKGPGSRCSNKNECCKPKDMETYTYYCGSRWDSSSGDFVRKCVICNRESSMC</sequence>
<accession>W4VSI6</accession>
<reference key="1">
    <citation type="journal article" date="2013" name="Toxins">
        <title>A proteomics and transcriptomics investigation of the venom from the barychelid spider Trittame loki (brush-foot trapdoor).</title>
        <authorList>
            <person name="Undheim E.A."/>
            <person name="Sunagar K."/>
            <person name="Herzig V."/>
            <person name="Kely L."/>
            <person name="Low D.H."/>
            <person name="Jackson T.N."/>
            <person name="Jones A."/>
            <person name="Kurniawan N."/>
            <person name="King G.F."/>
            <person name="Ali S.A."/>
            <person name="Antunes A."/>
            <person name="Ruder T."/>
            <person name="Fry B.G."/>
        </authorList>
    </citation>
    <scope>NUCLEOTIDE SEQUENCE [MRNA]</scope>
    <source>
        <tissue>Venom gland</tissue>
    </source>
</reference>
<evidence type="ECO:0000250" key="1">
    <source>
        <dbReference type="UniProtKB" id="A0A452CSQ9"/>
    </source>
</evidence>
<evidence type="ECO:0000255" key="2"/>
<evidence type="ECO:0000303" key="3">
    <source>
    </source>
</evidence>
<evidence type="ECO:0000305" key="4"/>
<evidence type="ECO:0000305" key="5">
    <source>
    </source>
</evidence>
<proteinExistence type="inferred from homology"/>
<comment type="function">
    <text evidence="4">Probable neurotoxin with ion channel impairing activity.</text>
</comment>
<comment type="subcellular location">
    <subcellularLocation>
        <location evidence="5">Secreted</location>
    </subcellularLocation>
</comment>
<comment type="tissue specificity">
    <text evidence="5">Expressed by the venom gland.</text>
</comment>
<comment type="domain">
    <text evidence="1">The presence of a 'disulfide through disulfide knot' structurally defines this protein as a knottin.</text>
</comment>
<comment type="similarity">
    <text evidence="4">Belongs to the neurotoxin 21 family.</text>
</comment>